<name>FYV8_KLULA</name>
<feature type="chain" id="PRO_0000292481" description="Protein FYV8">
    <location>
        <begin position="1"/>
        <end position="806"/>
    </location>
</feature>
<feature type="region of interest" description="Disordered" evidence="2">
    <location>
        <begin position="1"/>
        <end position="88"/>
    </location>
</feature>
<feature type="region of interest" description="Disordered" evidence="2">
    <location>
        <begin position="101"/>
        <end position="124"/>
    </location>
</feature>
<feature type="region of interest" description="Disordered" evidence="2">
    <location>
        <begin position="248"/>
        <end position="389"/>
    </location>
</feature>
<feature type="region of interest" description="Disordered" evidence="2">
    <location>
        <begin position="409"/>
        <end position="517"/>
    </location>
</feature>
<feature type="compositionally biased region" description="Polar residues" evidence="2">
    <location>
        <begin position="38"/>
        <end position="63"/>
    </location>
</feature>
<feature type="compositionally biased region" description="Polar residues" evidence="2">
    <location>
        <begin position="71"/>
        <end position="85"/>
    </location>
</feature>
<feature type="compositionally biased region" description="Basic and acidic residues" evidence="2">
    <location>
        <begin position="280"/>
        <end position="312"/>
    </location>
</feature>
<feature type="compositionally biased region" description="Polar residues" evidence="2">
    <location>
        <begin position="315"/>
        <end position="329"/>
    </location>
</feature>
<feature type="compositionally biased region" description="Acidic residues" evidence="2">
    <location>
        <begin position="418"/>
        <end position="432"/>
    </location>
</feature>
<feature type="compositionally biased region" description="Polar residues" evidence="2">
    <location>
        <begin position="458"/>
        <end position="500"/>
    </location>
</feature>
<keyword id="KW-1185">Reference proteome</keyword>
<protein>
    <recommendedName>
        <fullName>Protein FYV8</fullName>
    </recommendedName>
</protein>
<comment type="function">
    <text evidence="1">Involved in the resistance to unfolded protein response (UPR)-inducing agents.</text>
</comment>
<comment type="similarity">
    <text evidence="3">Belongs to the FYV8 family.</text>
</comment>
<comment type="sequence caution" evidence="3">
    <conflict type="erroneous initiation">
        <sequence resource="EMBL-CDS" id="CAH00586"/>
    </conflict>
</comment>
<sequence length="806" mass="88476">MSDNITRHKSQRWVSASKANYDGADWDAYSSNSEDEGLTNNIPQLPQVNIPESNNIAKSSSPDPSIGTCLRSDSLNTSVRSGNKSVNDDLDSLMHQISQEMTAKDEDVNNTSDPEDEDDAELKVSKTGYFAAYVNDEDTDDRESVKSDIESAKLAESATEINKTDNAKAESVSEVESVAESVKRAKVEVEPVQIVNVGEESFKGDDSEAESVKRADVEVEPFKIVSAEEEPLKGDDTEVELFKNAASEVETSQISVELQDEMIDPTTEIPSRIQGDVAISDDKGSKDAVDEDNWSKSDSHPESIGSQDKEEMPPSSINSLPSESQLSIQHSKEGDSNDSDSLLNGYGSEPSLMKDNASPVKLRKTSKTDLSYHDGYSSESSGEEKERAISEVSLGQYVVHSAESFKFRNPVRNSVLDSSDDDIDYTDEDGDLEVTKSGYFAAMVDEDKEIDDSDRHTLNNNDTDGLTADSDVNSITESVTKRLSQSSITQSDVPDQNSENDVGGYSDSSEDEEDGPQKLAFSTRESINLGKWKPDTDAFRSGFVTETIDINNPPEGYTVNEDGEIVEVNKNTTSNIQRNSSVASDGESQFNAFPHDVASDDDDLKTIADTKTIYDNQTIYNVPALIANNASAPALPTNIQITNESTDYVSSNDTIFKHVNGEAPKGESKLKEAFSSEGDEIPSVVHQSTVPNLDLVKLLSSNELHSQKLKKLNNYKEQLKEYDSGLQSWIQYALKSSTTSDKDFIFKDYKVNKHVQDAYAQADILSKKNSVANTVNQNVTHLKKKMFSSSMREKSKGLFSSIGKKL</sequence>
<accession>Q6CRE9</accession>
<reference key="1">
    <citation type="journal article" date="2004" name="Nature">
        <title>Genome evolution in yeasts.</title>
        <authorList>
            <person name="Dujon B."/>
            <person name="Sherman D."/>
            <person name="Fischer G."/>
            <person name="Durrens P."/>
            <person name="Casaregola S."/>
            <person name="Lafontaine I."/>
            <person name="de Montigny J."/>
            <person name="Marck C."/>
            <person name="Neuveglise C."/>
            <person name="Talla E."/>
            <person name="Goffard N."/>
            <person name="Frangeul L."/>
            <person name="Aigle M."/>
            <person name="Anthouard V."/>
            <person name="Babour A."/>
            <person name="Barbe V."/>
            <person name="Barnay S."/>
            <person name="Blanchin S."/>
            <person name="Beckerich J.-M."/>
            <person name="Beyne E."/>
            <person name="Bleykasten C."/>
            <person name="Boisrame A."/>
            <person name="Boyer J."/>
            <person name="Cattolico L."/>
            <person name="Confanioleri F."/>
            <person name="de Daruvar A."/>
            <person name="Despons L."/>
            <person name="Fabre E."/>
            <person name="Fairhead C."/>
            <person name="Ferry-Dumazet H."/>
            <person name="Groppi A."/>
            <person name="Hantraye F."/>
            <person name="Hennequin C."/>
            <person name="Jauniaux N."/>
            <person name="Joyet P."/>
            <person name="Kachouri R."/>
            <person name="Kerrest A."/>
            <person name="Koszul R."/>
            <person name="Lemaire M."/>
            <person name="Lesur I."/>
            <person name="Ma L."/>
            <person name="Muller H."/>
            <person name="Nicaud J.-M."/>
            <person name="Nikolski M."/>
            <person name="Oztas S."/>
            <person name="Ozier-Kalogeropoulos O."/>
            <person name="Pellenz S."/>
            <person name="Potier S."/>
            <person name="Richard G.-F."/>
            <person name="Straub M.-L."/>
            <person name="Suleau A."/>
            <person name="Swennen D."/>
            <person name="Tekaia F."/>
            <person name="Wesolowski-Louvel M."/>
            <person name="Westhof E."/>
            <person name="Wirth B."/>
            <person name="Zeniou-Meyer M."/>
            <person name="Zivanovic Y."/>
            <person name="Bolotin-Fukuhara M."/>
            <person name="Thierry A."/>
            <person name="Bouchier C."/>
            <person name="Caudron B."/>
            <person name="Scarpelli C."/>
            <person name="Gaillardin C."/>
            <person name="Weissenbach J."/>
            <person name="Wincker P."/>
            <person name="Souciet J.-L."/>
        </authorList>
    </citation>
    <scope>NUCLEOTIDE SEQUENCE [LARGE SCALE GENOMIC DNA]</scope>
    <source>
        <strain>ATCC 8585 / CBS 2359 / DSM 70799 / NBRC 1267 / NRRL Y-1140 / WM37</strain>
    </source>
</reference>
<proteinExistence type="inferred from homology"/>
<organism>
    <name type="scientific">Kluyveromyces lactis (strain ATCC 8585 / CBS 2359 / DSM 70799 / NBRC 1267 / NRRL Y-1140 / WM37)</name>
    <name type="common">Yeast</name>
    <name type="synonym">Candida sphaerica</name>
    <dbReference type="NCBI Taxonomy" id="284590"/>
    <lineage>
        <taxon>Eukaryota</taxon>
        <taxon>Fungi</taxon>
        <taxon>Dikarya</taxon>
        <taxon>Ascomycota</taxon>
        <taxon>Saccharomycotina</taxon>
        <taxon>Saccharomycetes</taxon>
        <taxon>Saccharomycetales</taxon>
        <taxon>Saccharomycetaceae</taxon>
        <taxon>Kluyveromyces</taxon>
    </lineage>
</organism>
<gene>
    <name type="primary">FYV8</name>
    <name type="ordered locus">KLLA0D09603g</name>
</gene>
<dbReference type="EMBL" id="CR382124">
    <property type="protein sequence ID" value="CAH00586.1"/>
    <property type="status" value="ALT_INIT"/>
    <property type="molecule type" value="Genomic_DNA"/>
</dbReference>
<dbReference type="RefSeq" id="XP_453490.1">
    <property type="nucleotide sequence ID" value="XM_453490.1"/>
</dbReference>
<dbReference type="FunCoup" id="Q6CRE9">
    <property type="interactions" value="126"/>
</dbReference>
<dbReference type="STRING" id="284590.Q6CRE9"/>
<dbReference type="PaxDb" id="284590-Q6CRE9"/>
<dbReference type="KEGG" id="kla:KLLA0_D09603g"/>
<dbReference type="eggNOG" id="ENOG502QPM9">
    <property type="taxonomic scope" value="Eukaryota"/>
</dbReference>
<dbReference type="HOGENOM" id="CLU_009686_0_0_1"/>
<dbReference type="InParanoid" id="Q6CRE9"/>
<dbReference type="Proteomes" id="UP000000598">
    <property type="component" value="Chromosome D"/>
</dbReference>
<dbReference type="InterPro" id="IPR026248">
    <property type="entry name" value="Fyv8"/>
</dbReference>
<dbReference type="PRINTS" id="PR02076">
    <property type="entry name" value="PROTEINFYV8"/>
</dbReference>
<evidence type="ECO:0000250" key="1"/>
<evidence type="ECO:0000256" key="2">
    <source>
        <dbReference type="SAM" id="MobiDB-lite"/>
    </source>
</evidence>
<evidence type="ECO:0000305" key="3"/>